<feature type="chain" id="PRO_0000093894" description="RNA polymerase sigma factor RpoD">
    <location>
        <begin position="1"/>
        <end position="585"/>
    </location>
</feature>
<feature type="DNA-binding region" description="H-T-H motif" evidence="1">
    <location>
        <begin position="545"/>
        <end position="564"/>
    </location>
</feature>
<feature type="region of interest" description="Disordered" evidence="2">
    <location>
        <begin position="67"/>
        <end position="93"/>
    </location>
</feature>
<feature type="region of interest" description="Sigma-70 factor domain-2" evidence="1">
    <location>
        <begin position="351"/>
        <end position="421"/>
    </location>
</feature>
<feature type="region of interest" description="Sigma-70 factor domain-3" evidence="1">
    <location>
        <begin position="430"/>
        <end position="506"/>
    </location>
</feature>
<feature type="region of interest" description="Sigma-70 factor domain-4" evidence="1">
    <location>
        <begin position="519"/>
        <end position="572"/>
    </location>
</feature>
<feature type="short sequence motif" description="Interaction with polymerase core subunit RpoC">
    <location>
        <begin position="375"/>
        <end position="378"/>
    </location>
</feature>
<comment type="function">
    <text evidence="1">Sigma factors are initiation factors that promote the attachment of RNA polymerase to specific initiation sites and are then released. This sigma factor is the primary sigma factor during exponential growth.</text>
</comment>
<comment type="subunit">
    <text evidence="1">Interacts transiently with the RNA polymerase catalytic core.</text>
</comment>
<comment type="subcellular location">
    <subcellularLocation>
        <location evidence="1">Cytoplasm</location>
    </subcellularLocation>
</comment>
<comment type="similarity">
    <text evidence="1">Belongs to the sigma-70 factor family. RpoD/SigA subfamily.</text>
</comment>
<evidence type="ECO:0000255" key="1">
    <source>
        <dbReference type="HAMAP-Rule" id="MF_00963"/>
    </source>
</evidence>
<evidence type="ECO:0000256" key="2">
    <source>
        <dbReference type="SAM" id="MobiDB-lite"/>
    </source>
</evidence>
<accession>P61540</accession>
<sequence>MENLQSMPEVQKIISLGKANGEVSYDDINEILPDKILNSEKIDDFFTLLHEMGIEIVEEYTRNTLEPASTLVPKDDSKPARKKKESSASTSGSEDPIKLYLREIGKVSLISGETEVFLAKRIEKGEKIIEETILSSSILRANYIKLLPKIRSKKIKVYDLIRVDKMYALNAEEAHKLEELFFKNILVIQEQEKVLQEAVSKIRKYSETSKKYKEFKEKIDASTEIIHNAIRELGVSQKEIQKISQKIKSMVFRIKEIDRHFLKIKAQYGQDVRDIKAFNRFIEKNEKLDDIEVKMGVNIDEVREVIKDIRNNERKLRRMEQEAGSTVQEIKDWGEKIIKGEREISQAKKELVKANLRLVVSIAKRYANRGMHFFDLIQEGNIGLIKAVDKFEYKKGYKFSTYATWWIRQAITRAISDQARTIRVPVHMIEQVNKVIRETRLFIQEFGRDPNNEEIAERLGWPVQKVKMVKNVAREPISLEIPVGSEEDSELGDFIPDTEVETPVNAAASSILAEQIRQVLHTLPAREQKVIRMRFGLDDGYPQTLEEVGYQFKVTRERIRQIEAKALRRLRHPSRSKKLKDYIDG</sequence>
<organism>
    <name type="scientific">Leptospira interrogans serogroup Icterohaemorrhagiae serovar copenhageni (strain Fiocruz L1-130)</name>
    <dbReference type="NCBI Taxonomy" id="267671"/>
    <lineage>
        <taxon>Bacteria</taxon>
        <taxon>Pseudomonadati</taxon>
        <taxon>Spirochaetota</taxon>
        <taxon>Spirochaetia</taxon>
        <taxon>Leptospirales</taxon>
        <taxon>Leptospiraceae</taxon>
        <taxon>Leptospira</taxon>
    </lineage>
</organism>
<reference key="1">
    <citation type="journal article" date="2004" name="J. Bacteriol.">
        <title>Comparative genomics of two Leptospira interrogans serovars reveals novel insights into physiology and pathogenesis.</title>
        <authorList>
            <person name="Nascimento A.L.T.O."/>
            <person name="Ko A.I."/>
            <person name="Martins E.A.L."/>
            <person name="Monteiro-Vitorello C.B."/>
            <person name="Ho P.L."/>
            <person name="Haake D.A."/>
            <person name="Verjovski-Almeida S."/>
            <person name="Hartskeerl R.A."/>
            <person name="Marques M.V."/>
            <person name="Oliveira M.C."/>
            <person name="Menck C.F.M."/>
            <person name="Leite L.C.C."/>
            <person name="Carrer H."/>
            <person name="Coutinho L.L."/>
            <person name="Degrave W.M."/>
            <person name="Dellagostin O.A."/>
            <person name="El-Dorry H."/>
            <person name="Ferro E.S."/>
            <person name="Ferro M.I.T."/>
            <person name="Furlan L.R."/>
            <person name="Gamberini M."/>
            <person name="Giglioti E.A."/>
            <person name="Goes-Neto A."/>
            <person name="Goldman G.H."/>
            <person name="Goldman M.H.S."/>
            <person name="Harakava R."/>
            <person name="Jeronimo S.M.B."/>
            <person name="Junqueira-de-Azevedo I.L.M."/>
            <person name="Kimura E.T."/>
            <person name="Kuramae E.E."/>
            <person name="Lemos E.G.M."/>
            <person name="Lemos M.V.F."/>
            <person name="Marino C.L."/>
            <person name="Nunes L.R."/>
            <person name="de Oliveira R.C."/>
            <person name="Pereira G.G."/>
            <person name="Reis M.S."/>
            <person name="Schriefer A."/>
            <person name="Siqueira W.J."/>
            <person name="Sommer P."/>
            <person name="Tsai S.M."/>
            <person name="Simpson A.J.G."/>
            <person name="Ferro J.A."/>
            <person name="Camargo L.E.A."/>
            <person name="Kitajima J.P."/>
            <person name="Setubal J.C."/>
            <person name="Van Sluys M.A."/>
        </authorList>
    </citation>
    <scope>NUCLEOTIDE SEQUENCE [LARGE SCALE GENOMIC DNA]</scope>
    <source>
        <strain>Fiocruz L1-130</strain>
    </source>
</reference>
<name>RPOD_LEPIC</name>
<keyword id="KW-0963">Cytoplasm</keyword>
<keyword id="KW-0238">DNA-binding</keyword>
<keyword id="KW-0731">Sigma factor</keyword>
<keyword id="KW-0804">Transcription</keyword>
<keyword id="KW-0805">Transcription regulation</keyword>
<protein>
    <recommendedName>
        <fullName evidence="1">RNA polymerase sigma factor RpoD</fullName>
    </recommendedName>
    <alternativeName>
        <fullName evidence="1">Sigma-70</fullName>
    </alternativeName>
</protein>
<proteinExistence type="inferred from homology"/>
<dbReference type="EMBL" id="AE016823">
    <property type="protein sequence ID" value="AAS70290.1"/>
    <property type="molecule type" value="Genomic_DNA"/>
</dbReference>
<dbReference type="RefSeq" id="WP_000429410.1">
    <property type="nucleotide sequence ID" value="NC_005823.1"/>
</dbReference>
<dbReference type="SMR" id="P61540"/>
<dbReference type="GeneID" id="61141599"/>
<dbReference type="KEGG" id="lic:LIC_11701"/>
<dbReference type="HOGENOM" id="CLU_014793_7_2_12"/>
<dbReference type="Proteomes" id="UP000007037">
    <property type="component" value="Chromosome I"/>
</dbReference>
<dbReference type="GO" id="GO:0005737">
    <property type="term" value="C:cytoplasm"/>
    <property type="evidence" value="ECO:0007669"/>
    <property type="project" value="UniProtKB-SubCell"/>
</dbReference>
<dbReference type="GO" id="GO:0003677">
    <property type="term" value="F:DNA binding"/>
    <property type="evidence" value="ECO:0007669"/>
    <property type="project" value="UniProtKB-UniRule"/>
</dbReference>
<dbReference type="GO" id="GO:0016987">
    <property type="term" value="F:sigma factor activity"/>
    <property type="evidence" value="ECO:0007669"/>
    <property type="project" value="UniProtKB-UniRule"/>
</dbReference>
<dbReference type="GO" id="GO:0006352">
    <property type="term" value="P:DNA-templated transcription initiation"/>
    <property type="evidence" value="ECO:0007669"/>
    <property type="project" value="UniProtKB-UniRule"/>
</dbReference>
<dbReference type="CDD" id="cd06171">
    <property type="entry name" value="Sigma70_r4"/>
    <property type="match status" value="1"/>
</dbReference>
<dbReference type="FunFam" id="1.10.10.10:FF:000004">
    <property type="entry name" value="RNA polymerase sigma factor SigA"/>
    <property type="match status" value="1"/>
</dbReference>
<dbReference type="FunFam" id="1.10.601.10:FF:000001">
    <property type="entry name" value="RNA polymerase sigma factor SigA"/>
    <property type="match status" value="1"/>
</dbReference>
<dbReference type="Gene3D" id="1.10.601.10">
    <property type="entry name" value="RNA Polymerase Primary Sigma Factor"/>
    <property type="match status" value="1"/>
</dbReference>
<dbReference type="Gene3D" id="1.10.220.120">
    <property type="entry name" value="Sigma-70 factor, region 1.1"/>
    <property type="match status" value="1"/>
</dbReference>
<dbReference type="Gene3D" id="1.10.10.10">
    <property type="entry name" value="Winged helix-like DNA-binding domain superfamily/Winged helix DNA-binding domain"/>
    <property type="match status" value="2"/>
</dbReference>
<dbReference type="HAMAP" id="MF_00963">
    <property type="entry name" value="Sigma70_RpoD_SigA"/>
    <property type="match status" value="1"/>
</dbReference>
<dbReference type="InterPro" id="IPR014284">
    <property type="entry name" value="RNA_pol_sigma-70_dom"/>
</dbReference>
<dbReference type="InterPro" id="IPR000943">
    <property type="entry name" value="RNA_pol_sigma70"/>
</dbReference>
<dbReference type="InterPro" id="IPR009042">
    <property type="entry name" value="RNA_pol_sigma70_r1_2"/>
</dbReference>
<dbReference type="InterPro" id="IPR007627">
    <property type="entry name" value="RNA_pol_sigma70_r2"/>
</dbReference>
<dbReference type="InterPro" id="IPR007624">
    <property type="entry name" value="RNA_pol_sigma70_r3"/>
</dbReference>
<dbReference type="InterPro" id="IPR007630">
    <property type="entry name" value="RNA_pol_sigma70_r4"/>
</dbReference>
<dbReference type="InterPro" id="IPR007127">
    <property type="entry name" value="RNA_pol_sigma_70_r1_1"/>
</dbReference>
<dbReference type="InterPro" id="IPR042189">
    <property type="entry name" value="RNA_pol_sigma_70_r1_1_sf"/>
</dbReference>
<dbReference type="InterPro" id="IPR013325">
    <property type="entry name" value="RNA_pol_sigma_r2"/>
</dbReference>
<dbReference type="InterPro" id="IPR013324">
    <property type="entry name" value="RNA_pol_sigma_r3/r4-like"/>
</dbReference>
<dbReference type="InterPro" id="IPR012760">
    <property type="entry name" value="RNA_pol_sigma_RpoD_C"/>
</dbReference>
<dbReference type="InterPro" id="IPR050239">
    <property type="entry name" value="Sigma-70_RNA_pol_init_factors"/>
</dbReference>
<dbReference type="InterPro" id="IPR028630">
    <property type="entry name" value="Sigma70_RpoD"/>
</dbReference>
<dbReference type="InterPro" id="IPR036388">
    <property type="entry name" value="WH-like_DNA-bd_sf"/>
</dbReference>
<dbReference type="NCBIfam" id="NF004208">
    <property type="entry name" value="PRK05658.1"/>
    <property type="match status" value="1"/>
</dbReference>
<dbReference type="NCBIfam" id="TIGR02393">
    <property type="entry name" value="RpoD_Cterm"/>
    <property type="match status" value="1"/>
</dbReference>
<dbReference type="NCBIfam" id="TIGR02937">
    <property type="entry name" value="sigma70-ECF"/>
    <property type="match status" value="1"/>
</dbReference>
<dbReference type="PANTHER" id="PTHR30603">
    <property type="entry name" value="RNA POLYMERASE SIGMA FACTOR RPO"/>
    <property type="match status" value="1"/>
</dbReference>
<dbReference type="PANTHER" id="PTHR30603:SF60">
    <property type="entry name" value="RNA POLYMERASE SIGMA FACTOR RPOD"/>
    <property type="match status" value="1"/>
</dbReference>
<dbReference type="Pfam" id="PF03979">
    <property type="entry name" value="Sigma70_r1_1"/>
    <property type="match status" value="1"/>
</dbReference>
<dbReference type="Pfam" id="PF00140">
    <property type="entry name" value="Sigma70_r1_2"/>
    <property type="match status" value="1"/>
</dbReference>
<dbReference type="Pfam" id="PF04542">
    <property type="entry name" value="Sigma70_r2"/>
    <property type="match status" value="1"/>
</dbReference>
<dbReference type="Pfam" id="PF04539">
    <property type="entry name" value="Sigma70_r3"/>
    <property type="match status" value="1"/>
</dbReference>
<dbReference type="Pfam" id="PF04545">
    <property type="entry name" value="Sigma70_r4"/>
    <property type="match status" value="1"/>
</dbReference>
<dbReference type="PRINTS" id="PR00046">
    <property type="entry name" value="SIGMA70FCT"/>
</dbReference>
<dbReference type="SUPFAM" id="SSF88946">
    <property type="entry name" value="Sigma2 domain of RNA polymerase sigma factors"/>
    <property type="match status" value="1"/>
</dbReference>
<dbReference type="SUPFAM" id="SSF88659">
    <property type="entry name" value="Sigma3 and sigma4 domains of RNA polymerase sigma factors"/>
    <property type="match status" value="2"/>
</dbReference>
<dbReference type="PROSITE" id="PS00715">
    <property type="entry name" value="SIGMA70_1"/>
    <property type="match status" value="1"/>
</dbReference>
<dbReference type="PROSITE" id="PS00716">
    <property type="entry name" value="SIGMA70_2"/>
    <property type="match status" value="1"/>
</dbReference>
<gene>
    <name evidence="1" type="primary">rpoD</name>
    <name type="ordered locus">LIC_11701</name>
</gene>